<proteinExistence type="inferred from homology"/>
<evidence type="ECO:0000250" key="1"/>
<evidence type="ECO:0000255" key="2">
    <source>
        <dbReference type="PROSITE-ProRule" id="PRU00507"/>
    </source>
</evidence>
<evidence type="ECO:0000256" key="3">
    <source>
        <dbReference type="SAM" id="MobiDB-lite"/>
    </source>
</evidence>
<evidence type="ECO:0000305" key="4"/>
<feature type="chain" id="PRO_0000273485" description="Nascent polypeptide-associated complex subunit alpha">
    <location>
        <begin position="1"/>
        <end position="200"/>
    </location>
</feature>
<feature type="domain" description="NAC-A/B" evidence="2">
    <location>
        <begin position="49"/>
        <end position="114"/>
    </location>
</feature>
<feature type="domain" description="UBA">
    <location>
        <begin position="161"/>
        <end position="200"/>
    </location>
</feature>
<feature type="region of interest" description="Disordered" evidence="3">
    <location>
        <begin position="1"/>
        <end position="52"/>
    </location>
</feature>
<feature type="region of interest" description="Disordered" evidence="3">
    <location>
        <begin position="120"/>
        <end position="165"/>
    </location>
</feature>
<feature type="compositionally biased region" description="Basic and acidic residues" evidence="3">
    <location>
        <begin position="1"/>
        <end position="19"/>
    </location>
</feature>
<feature type="compositionally biased region" description="Acidic residues" evidence="3">
    <location>
        <begin position="20"/>
        <end position="34"/>
    </location>
</feature>
<feature type="compositionally biased region" description="Basic and acidic residues" evidence="3">
    <location>
        <begin position="127"/>
        <end position="143"/>
    </location>
</feature>
<feature type="compositionally biased region" description="Acidic residues" evidence="3">
    <location>
        <begin position="144"/>
        <end position="160"/>
    </location>
</feature>
<protein>
    <recommendedName>
        <fullName>Nascent polypeptide-associated complex subunit alpha</fullName>
        <shortName>NAC-alpha</shortName>
    </recommendedName>
    <alternativeName>
        <fullName>Alpha-NAC</fullName>
    </alternativeName>
</protein>
<dbReference type="EMBL" id="CH408031">
    <property type="protein sequence ID" value="EAQ89654.1"/>
    <property type="status" value="ALT_FRAME"/>
    <property type="molecule type" value="Genomic_DNA"/>
</dbReference>
<dbReference type="RefSeq" id="XP_001222368.1">
    <property type="nucleotide sequence ID" value="XM_001222367.1"/>
</dbReference>
<dbReference type="SMR" id="Q2H4Z2"/>
<dbReference type="FunCoup" id="Q2H4Z2">
    <property type="interactions" value="506"/>
</dbReference>
<dbReference type="STRING" id="306901.Q2H4Z2"/>
<dbReference type="GeneID" id="4391322"/>
<dbReference type="VEuPathDB" id="FungiDB:CHGG_06273"/>
<dbReference type="eggNOG" id="KOG2239">
    <property type="taxonomic scope" value="Eukaryota"/>
</dbReference>
<dbReference type="HOGENOM" id="CLU_057806_2_0_1"/>
<dbReference type="InParanoid" id="Q2H4Z2"/>
<dbReference type="OrthoDB" id="3169036at2759"/>
<dbReference type="Proteomes" id="UP000001056">
    <property type="component" value="Unassembled WGS sequence"/>
</dbReference>
<dbReference type="GO" id="GO:0005854">
    <property type="term" value="C:nascent polypeptide-associated complex"/>
    <property type="evidence" value="ECO:0007669"/>
    <property type="project" value="InterPro"/>
</dbReference>
<dbReference type="GO" id="GO:0005634">
    <property type="term" value="C:nucleus"/>
    <property type="evidence" value="ECO:0007669"/>
    <property type="project" value="UniProtKB-SubCell"/>
</dbReference>
<dbReference type="GO" id="GO:0015031">
    <property type="term" value="P:protein transport"/>
    <property type="evidence" value="ECO:0007669"/>
    <property type="project" value="UniProtKB-KW"/>
</dbReference>
<dbReference type="CDD" id="cd22054">
    <property type="entry name" value="NAC_NACA"/>
    <property type="match status" value="1"/>
</dbReference>
<dbReference type="CDD" id="cd14358">
    <property type="entry name" value="UBA_NAC_euk"/>
    <property type="match status" value="1"/>
</dbReference>
<dbReference type="FunFam" id="2.20.70.30:FF:000002">
    <property type="entry name" value="Nascent polypeptide-associated complex (NAC), alpha subunit"/>
    <property type="match status" value="1"/>
</dbReference>
<dbReference type="FunFam" id="1.10.8.10:FF:000006">
    <property type="entry name" value="Putative nascent polypeptide-associated complex subunit alpha"/>
    <property type="match status" value="1"/>
</dbReference>
<dbReference type="Gene3D" id="1.10.8.10">
    <property type="entry name" value="DNA helicase RuvA subunit, C-terminal domain"/>
    <property type="match status" value="1"/>
</dbReference>
<dbReference type="Gene3D" id="2.20.70.30">
    <property type="entry name" value="Nascent polypeptide-associated complex domain"/>
    <property type="match status" value="1"/>
</dbReference>
<dbReference type="InterPro" id="IPR016641">
    <property type="entry name" value="EGD2/NACA0like"/>
</dbReference>
<dbReference type="InterPro" id="IPR044034">
    <property type="entry name" value="NAC-like_UBA"/>
</dbReference>
<dbReference type="InterPro" id="IPR038187">
    <property type="entry name" value="NAC_A/B_dom_sf"/>
</dbReference>
<dbReference type="InterPro" id="IPR002715">
    <property type="entry name" value="Nas_poly-pep-assoc_cplx_dom"/>
</dbReference>
<dbReference type="PANTHER" id="PTHR21713">
    <property type="entry name" value="NASCENT POLYPEPTIDE ASSOCIATED COMPLEX ALPHA SUBUNIT-RELATED"/>
    <property type="match status" value="1"/>
</dbReference>
<dbReference type="Pfam" id="PF01849">
    <property type="entry name" value="NAC"/>
    <property type="match status" value="1"/>
</dbReference>
<dbReference type="Pfam" id="PF19026">
    <property type="entry name" value="UBA_HYPK"/>
    <property type="match status" value="1"/>
</dbReference>
<dbReference type="PIRSF" id="PIRSF015901">
    <property type="entry name" value="NAC_alpha"/>
    <property type="match status" value="1"/>
</dbReference>
<dbReference type="SMART" id="SM01407">
    <property type="entry name" value="NAC"/>
    <property type="match status" value="1"/>
</dbReference>
<dbReference type="PROSITE" id="PS51151">
    <property type="entry name" value="NAC_AB"/>
    <property type="match status" value="1"/>
</dbReference>
<sequence length="200" mass="22053">MADPRIEELPDEETKKPTVEELDESSDEESDAEAGDASLPAGSTAVIHSRNEKKARKAIEKLHLTRVPGITRVTLRRPKNILFVINNPEVYKSPNSNTYIVFGEAKIEDLNASAQAAAAQQLANQTAEHDHAGHTHDHKHEAAKEEEEEEDDGEEVDAEGIEDKDIELVMTQANVSRKKAIKALKENDNDIVNSIMALSV</sequence>
<comment type="function">
    <text evidence="1">Component of the nascent polypeptide-associated complex (NAC), a dynamic component of the ribosomal exit tunnel, protecting the emerging polypeptides from interaction with other cytoplasmic proteins to ensure appropriate nascent protein targeting. The NAC complex also promotes mitochondrial protein import by enhancing productive ribosome interactions with the outer mitochondrial membrane and blocks the inappropriate interaction of ribosomes translating non-secretory nascent polypeptides with translocation sites in the membrane of the endoplasmic reticulum. EGD2 may also be involved in transcription regulation (By similarity).</text>
</comment>
<comment type="subunit">
    <text evidence="1">Part of the nascent polypeptide-associated complex (NAC), consisting of EGD2 and EGD1. NAC associates with ribosomes via EGD1 (By similarity).</text>
</comment>
<comment type="subcellular location">
    <subcellularLocation>
        <location evidence="1">Cytoplasm</location>
    </subcellularLocation>
    <subcellularLocation>
        <location evidence="1">Nucleus</location>
    </subcellularLocation>
    <text evidence="1">Predominantly cytoplasmic, may also transiently localize to the nucleus.</text>
</comment>
<comment type="similarity">
    <text evidence="4">Belongs to the NAC-alpha family.</text>
</comment>
<comment type="sequence caution" evidence="4">
    <conflict type="frameshift">
        <sequence resource="EMBL-CDS" id="EAQ89654"/>
    </conflict>
</comment>
<reference key="1">
    <citation type="journal article" date="2015" name="Genome Announc.">
        <title>Draft genome sequence of the cellulolytic fungus Chaetomium globosum.</title>
        <authorList>
            <person name="Cuomo C.A."/>
            <person name="Untereiner W.A."/>
            <person name="Ma L.-J."/>
            <person name="Grabherr M."/>
            <person name="Birren B.W."/>
        </authorList>
    </citation>
    <scope>NUCLEOTIDE SEQUENCE [LARGE SCALE GENOMIC DNA]</scope>
    <source>
        <strain>ATCC 6205 / CBS 148.51 / DSM 1962 / NBRC 6347 / NRRL 1970</strain>
    </source>
</reference>
<keyword id="KW-0963">Cytoplasm</keyword>
<keyword id="KW-0539">Nucleus</keyword>
<keyword id="KW-0653">Protein transport</keyword>
<keyword id="KW-1185">Reference proteome</keyword>
<keyword id="KW-0813">Transport</keyword>
<gene>
    <name type="primary">EGD2</name>
    <name type="ORF">CHGG_06273</name>
</gene>
<name>NACA_CHAGB</name>
<accession>Q2H4Z2</accession>
<organism>
    <name type="scientific">Chaetomium globosum (strain ATCC 6205 / CBS 148.51 / DSM 1962 / NBRC 6347 / NRRL 1970)</name>
    <name type="common">Soil fungus</name>
    <dbReference type="NCBI Taxonomy" id="306901"/>
    <lineage>
        <taxon>Eukaryota</taxon>
        <taxon>Fungi</taxon>
        <taxon>Dikarya</taxon>
        <taxon>Ascomycota</taxon>
        <taxon>Pezizomycotina</taxon>
        <taxon>Sordariomycetes</taxon>
        <taxon>Sordariomycetidae</taxon>
        <taxon>Sordariales</taxon>
        <taxon>Chaetomiaceae</taxon>
        <taxon>Chaetomium</taxon>
    </lineage>
</organism>